<keyword id="KW-0025">Alternative splicing</keyword>
<keyword id="KW-0028">Amino-acid biosynthesis</keyword>
<keyword id="KW-0057">Aromatic amino acid biosynthesis</keyword>
<keyword id="KW-0150">Chloroplast</keyword>
<keyword id="KW-0413">Isomerase</keyword>
<keyword id="KW-0934">Plastid</keyword>
<keyword id="KW-1185">Reference proteome</keyword>
<keyword id="KW-0809">Transit peptide</keyword>
<keyword id="KW-0822">Tryptophan biosynthesis</keyword>
<proteinExistence type="evidence at transcript level"/>
<organism>
    <name type="scientific">Arabidopsis thaliana</name>
    <name type="common">Mouse-ear cress</name>
    <dbReference type="NCBI Taxonomy" id="3702"/>
    <lineage>
        <taxon>Eukaryota</taxon>
        <taxon>Viridiplantae</taxon>
        <taxon>Streptophyta</taxon>
        <taxon>Embryophyta</taxon>
        <taxon>Tracheophyta</taxon>
        <taxon>Spermatophyta</taxon>
        <taxon>Magnoliopsida</taxon>
        <taxon>eudicotyledons</taxon>
        <taxon>Gunneridae</taxon>
        <taxon>Pentapetalae</taxon>
        <taxon>rosids</taxon>
        <taxon>malvids</taxon>
        <taxon>Brassicales</taxon>
        <taxon>Brassicaceae</taxon>
        <taxon>Camelineae</taxon>
        <taxon>Arabidopsis</taxon>
    </lineage>
</organism>
<gene>
    <name type="primary">PAI3</name>
    <name type="ordered locus">At1g29410</name>
    <name type="ORF">F15D2.31</name>
</gene>
<dbReference type="EC" id="5.3.1.24"/>
<dbReference type="EMBL" id="U18969">
    <property type="protein sequence ID" value="AAC49004.1"/>
    <property type="status" value="ALT_SEQ"/>
    <property type="molecule type" value="Genomic_DNA"/>
</dbReference>
<dbReference type="EMBL" id="AC068667">
    <property type="status" value="NOT_ANNOTATED_CDS"/>
    <property type="molecule type" value="Genomic_DNA"/>
</dbReference>
<dbReference type="EMBL" id="CP002684">
    <property type="protein sequence ID" value="AEE31084.1"/>
    <property type="molecule type" value="Genomic_DNA"/>
</dbReference>
<dbReference type="EMBL" id="CP002684">
    <property type="protein sequence ID" value="AEE31085.1"/>
    <property type="molecule type" value="Genomic_DNA"/>
</dbReference>
<dbReference type="EMBL" id="CP002684">
    <property type="protein sequence ID" value="ANM59934.1"/>
    <property type="molecule type" value="Genomic_DNA"/>
</dbReference>
<dbReference type="EMBL" id="CP002684">
    <property type="protein sequence ID" value="ANM59936.1"/>
    <property type="molecule type" value="Genomic_DNA"/>
</dbReference>
<dbReference type="EMBL" id="AY072443">
    <property type="protein sequence ID" value="AAL62435.1"/>
    <property type="molecule type" value="mRNA"/>
</dbReference>
<dbReference type="EMBL" id="AY099722">
    <property type="protein sequence ID" value="AAM20573.1"/>
    <property type="molecule type" value="mRNA"/>
</dbReference>
<dbReference type="EMBL" id="BT000293">
    <property type="protein sequence ID" value="AAN15612.1"/>
    <property type="molecule type" value="mRNA"/>
</dbReference>
<dbReference type="RefSeq" id="NP_001322252.1">
    <molecule id="Q8LPI9-2"/>
    <property type="nucleotide sequence ID" value="NM_001332855.1"/>
</dbReference>
<dbReference type="RefSeq" id="NP_001322254.1">
    <molecule id="Q8LPI9-1"/>
    <property type="nucleotide sequence ID" value="NM_001332853.1"/>
</dbReference>
<dbReference type="RefSeq" id="NP_174234.3">
    <molecule id="Q8LPI9-1"/>
    <property type="nucleotide sequence ID" value="NM_102681.4"/>
</dbReference>
<dbReference type="RefSeq" id="NP_850954.1">
    <molecule id="Q8LPI9-2"/>
    <property type="nucleotide sequence ID" value="NM_180623.2"/>
</dbReference>
<dbReference type="SMR" id="Q8LPI9"/>
<dbReference type="FunCoup" id="Q8LPI9">
    <property type="interactions" value="329"/>
</dbReference>
<dbReference type="STRING" id="3702.Q8LPI9"/>
<dbReference type="PaxDb" id="3702-AT1G29410.2"/>
<dbReference type="ProteomicsDB" id="248633">
    <molecule id="Q8LPI9-1"/>
</dbReference>
<dbReference type="EnsemblPlants" id="AT1G29410.1">
    <molecule id="Q8LPI9-2"/>
    <property type="protein sequence ID" value="AT1G29410.1"/>
    <property type="gene ID" value="AT1G29410"/>
</dbReference>
<dbReference type="EnsemblPlants" id="AT1G29410.2">
    <molecule id="Q8LPI9-1"/>
    <property type="protein sequence ID" value="AT1G29410.2"/>
    <property type="gene ID" value="AT1G29410"/>
</dbReference>
<dbReference type="EnsemblPlants" id="AT1G29410.4">
    <molecule id="Q8LPI9-1"/>
    <property type="protein sequence ID" value="AT1G29410.4"/>
    <property type="gene ID" value="AT1G29410"/>
</dbReference>
<dbReference type="EnsemblPlants" id="AT1G29410.6">
    <molecule id="Q8LPI9-2"/>
    <property type="protein sequence ID" value="AT1G29410.6"/>
    <property type="gene ID" value="AT1G29410"/>
</dbReference>
<dbReference type="GeneID" id="839817"/>
<dbReference type="Gramene" id="AT1G29410.1">
    <molecule id="Q8LPI9-2"/>
    <property type="protein sequence ID" value="AT1G29410.1"/>
    <property type="gene ID" value="AT1G29410"/>
</dbReference>
<dbReference type="Gramene" id="AT1G29410.2">
    <molecule id="Q8LPI9-1"/>
    <property type="protein sequence ID" value="AT1G29410.2"/>
    <property type="gene ID" value="AT1G29410"/>
</dbReference>
<dbReference type="Gramene" id="AT1G29410.4">
    <molecule id="Q8LPI9-1"/>
    <property type="protein sequence ID" value="AT1G29410.4"/>
    <property type="gene ID" value="AT1G29410"/>
</dbReference>
<dbReference type="Gramene" id="AT1G29410.6">
    <molecule id="Q8LPI9-2"/>
    <property type="protein sequence ID" value="AT1G29410.6"/>
    <property type="gene ID" value="AT1G29410"/>
</dbReference>
<dbReference type="KEGG" id="ath:AT1G29410"/>
<dbReference type="Araport" id="AT1G29410"/>
<dbReference type="TAIR" id="AT1G29410">
    <property type="gene designation" value="PAI3"/>
</dbReference>
<dbReference type="eggNOG" id="KOG4202">
    <property type="taxonomic scope" value="Eukaryota"/>
</dbReference>
<dbReference type="InParanoid" id="Q8LPI9"/>
<dbReference type="PhylomeDB" id="Q8LPI9"/>
<dbReference type="BioCyc" id="ARA:AT1G29410-MONOMER"/>
<dbReference type="UniPathway" id="UPA00035">
    <property type="reaction ID" value="UER00042"/>
</dbReference>
<dbReference type="PRO" id="PR:Q8LPI9"/>
<dbReference type="Proteomes" id="UP000006548">
    <property type="component" value="Chromosome 1"/>
</dbReference>
<dbReference type="ExpressionAtlas" id="Q8LPI9">
    <property type="expression patterns" value="baseline and differential"/>
</dbReference>
<dbReference type="GO" id="GO:0009507">
    <property type="term" value="C:chloroplast"/>
    <property type="evidence" value="ECO:0007669"/>
    <property type="project" value="UniProtKB-SubCell"/>
</dbReference>
<dbReference type="GO" id="GO:0004640">
    <property type="term" value="F:phosphoribosylanthranilate isomerase activity"/>
    <property type="evidence" value="ECO:0000250"/>
    <property type="project" value="TAIR"/>
</dbReference>
<dbReference type="GO" id="GO:0000162">
    <property type="term" value="P:L-tryptophan biosynthetic process"/>
    <property type="evidence" value="ECO:0007669"/>
    <property type="project" value="UniProtKB-UniPathway"/>
</dbReference>
<dbReference type="GO" id="GO:0009411">
    <property type="term" value="P:response to UV"/>
    <property type="evidence" value="ECO:0000270"/>
    <property type="project" value="TAIR"/>
</dbReference>
<dbReference type="CDD" id="cd00405">
    <property type="entry name" value="PRAI"/>
    <property type="match status" value="1"/>
</dbReference>
<dbReference type="Gene3D" id="3.20.20.70">
    <property type="entry name" value="Aldolase class I"/>
    <property type="match status" value="1"/>
</dbReference>
<dbReference type="HAMAP" id="MF_00135">
    <property type="entry name" value="PRAI"/>
    <property type="match status" value="1"/>
</dbReference>
<dbReference type="InterPro" id="IPR013785">
    <property type="entry name" value="Aldolase_TIM"/>
</dbReference>
<dbReference type="InterPro" id="IPR001240">
    <property type="entry name" value="PRAI_dom"/>
</dbReference>
<dbReference type="InterPro" id="IPR011060">
    <property type="entry name" value="RibuloseP-bd_barrel"/>
</dbReference>
<dbReference type="InterPro" id="IPR044643">
    <property type="entry name" value="TrpF_fam"/>
</dbReference>
<dbReference type="PANTHER" id="PTHR42894">
    <property type="entry name" value="N-(5'-PHOSPHORIBOSYL)ANTHRANILATE ISOMERASE"/>
    <property type="match status" value="1"/>
</dbReference>
<dbReference type="PANTHER" id="PTHR42894:SF1">
    <property type="entry name" value="N-(5'-PHOSPHORIBOSYL)ANTHRANILATE ISOMERASE"/>
    <property type="match status" value="1"/>
</dbReference>
<dbReference type="Pfam" id="PF00697">
    <property type="entry name" value="PRAI"/>
    <property type="match status" value="1"/>
</dbReference>
<dbReference type="SUPFAM" id="SSF51366">
    <property type="entry name" value="Ribulose-phoshate binding barrel"/>
    <property type="match status" value="1"/>
</dbReference>
<name>PAI3_ARATH</name>
<feature type="transit peptide" description="Chloroplast" evidence="1">
    <location>
        <begin position="1"/>
        <end position="32"/>
    </location>
</feature>
<feature type="chain" id="PRO_0000417455" description="N-(5'-phosphoribosyl)anthranilate isomerase 3, chloroplastic">
    <location>
        <begin position="33"/>
        <end position="244"/>
    </location>
</feature>
<feature type="splice variant" id="VSP_043745" description="In isoform 2." evidence="2">
    <original>YLDQLLSFFALS</original>
    <variation>FNHNNFLLWKRI</variation>
    <location>
        <begin position="202"/>
        <end position="213"/>
    </location>
</feature>
<feature type="splice variant" id="VSP_043746" description="In isoform 2." evidence="2">
    <location>
        <begin position="214"/>
        <end position="244"/>
    </location>
</feature>
<evidence type="ECO:0000255" key="1"/>
<evidence type="ECO:0000303" key="2">
    <source>
    </source>
</evidence>
<evidence type="ECO:0000305" key="3"/>
<protein>
    <recommendedName>
        <fullName>N-(5'-phosphoribosyl)anthranilate isomerase 3, chloroplastic</fullName>
        <ecNumber>5.3.1.24</ecNumber>
    </recommendedName>
</protein>
<sequence length="244" mass="26525">MSTGISSDLHLHPRALNFSKTSKSGLSNRKVSFSSVGYAQNRKLSCSVSSTENVAPKDDDRGKDRPLVKMCGITSARDAAMAVEAGADFIGMIIWPHSKRSISLSVAKDISQVAREGGAKPVGVFVEDDENTILRAADSSDLELVQLHGNSSRAAFSRLVRERKVIYVLNANEDGKLLNVVPEEDGHLADWILVDSATGGRYLDQLLSFFALSHCNVFLRGTSYTITLVHETVCLSQVTEISRV</sequence>
<reference key="1">
    <citation type="journal article" date="1995" name="Plant Cell">
        <title>Arabidopsis phosphoribosylanthranilate isomerase: molecular genetic analysis of triplicate tryptophan pathway genes.</title>
        <authorList>
            <person name="Li J."/>
            <person name="Zhao J."/>
            <person name="Rose A.B."/>
            <person name="Schmidt R."/>
            <person name="Last R.L."/>
        </authorList>
    </citation>
    <scope>NUCLEOTIDE SEQUENCE [GENOMIC DNA]</scope>
    <source>
        <strain>cv. Columbia</strain>
    </source>
</reference>
<reference key="2">
    <citation type="journal article" date="2000" name="Nature">
        <title>Sequence and analysis of chromosome 1 of the plant Arabidopsis thaliana.</title>
        <authorList>
            <person name="Theologis A."/>
            <person name="Ecker J.R."/>
            <person name="Palm C.J."/>
            <person name="Federspiel N.A."/>
            <person name="Kaul S."/>
            <person name="White O."/>
            <person name="Alonso J."/>
            <person name="Altafi H."/>
            <person name="Araujo R."/>
            <person name="Bowman C.L."/>
            <person name="Brooks S.Y."/>
            <person name="Buehler E."/>
            <person name="Chan A."/>
            <person name="Chao Q."/>
            <person name="Chen H."/>
            <person name="Cheuk R.F."/>
            <person name="Chin C.W."/>
            <person name="Chung M.K."/>
            <person name="Conn L."/>
            <person name="Conway A.B."/>
            <person name="Conway A.R."/>
            <person name="Creasy T.H."/>
            <person name="Dewar K."/>
            <person name="Dunn P."/>
            <person name="Etgu P."/>
            <person name="Feldblyum T.V."/>
            <person name="Feng J.-D."/>
            <person name="Fong B."/>
            <person name="Fujii C.Y."/>
            <person name="Gill J.E."/>
            <person name="Goldsmith A.D."/>
            <person name="Haas B."/>
            <person name="Hansen N.F."/>
            <person name="Hughes B."/>
            <person name="Huizar L."/>
            <person name="Hunter J.L."/>
            <person name="Jenkins J."/>
            <person name="Johnson-Hopson C."/>
            <person name="Khan S."/>
            <person name="Khaykin E."/>
            <person name="Kim C.J."/>
            <person name="Koo H.L."/>
            <person name="Kremenetskaia I."/>
            <person name="Kurtz D.B."/>
            <person name="Kwan A."/>
            <person name="Lam B."/>
            <person name="Langin-Hooper S."/>
            <person name="Lee A."/>
            <person name="Lee J.M."/>
            <person name="Lenz C.A."/>
            <person name="Li J.H."/>
            <person name="Li Y.-P."/>
            <person name="Lin X."/>
            <person name="Liu S.X."/>
            <person name="Liu Z.A."/>
            <person name="Luros J.S."/>
            <person name="Maiti R."/>
            <person name="Marziali A."/>
            <person name="Militscher J."/>
            <person name="Miranda M."/>
            <person name="Nguyen M."/>
            <person name="Nierman W.C."/>
            <person name="Osborne B.I."/>
            <person name="Pai G."/>
            <person name="Peterson J."/>
            <person name="Pham P.K."/>
            <person name="Rizzo M."/>
            <person name="Rooney T."/>
            <person name="Rowley D."/>
            <person name="Sakano H."/>
            <person name="Salzberg S.L."/>
            <person name="Schwartz J.R."/>
            <person name="Shinn P."/>
            <person name="Southwick A.M."/>
            <person name="Sun H."/>
            <person name="Tallon L.J."/>
            <person name="Tambunga G."/>
            <person name="Toriumi M.J."/>
            <person name="Town C.D."/>
            <person name="Utterback T."/>
            <person name="Van Aken S."/>
            <person name="Vaysberg M."/>
            <person name="Vysotskaia V.S."/>
            <person name="Walker M."/>
            <person name="Wu D."/>
            <person name="Yu G."/>
            <person name="Fraser C.M."/>
            <person name="Venter J.C."/>
            <person name="Davis R.W."/>
        </authorList>
    </citation>
    <scope>NUCLEOTIDE SEQUENCE [LARGE SCALE GENOMIC DNA]</scope>
    <source>
        <strain>cv. Columbia</strain>
    </source>
</reference>
<reference key="3">
    <citation type="journal article" date="2017" name="Plant J.">
        <title>Araport11: a complete reannotation of the Arabidopsis thaliana reference genome.</title>
        <authorList>
            <person name="Cheng C.Y."/>
            <person name="Krishnakumar V."/>
            <person name="Chan A.P."/>
            <person name="Thibaud-Nissen F."/>
            <person name="Schobel S."/>
            <person name="Town C.D."/>
        </authorList>
    </citation>
    <scope>GENOME REANNOTATION</scope>
    <source>
        <strain>cv. Columbia</strain>
    </source>
</reference>
<reference key="4">
    <citation type="journal article" date="2003" name="Science">
        <title>Empirical analysis of transcriptional activity in the Arabidopsis genome.</title>
        <authorList>
            <person name="Yamada K."/>
            <person name="Lim J."/>
            <person name="Dale J.M."/>
            <person name="Chen H."/>
            <person name="Shinn P."/>
            <person name="Palm C.J."/>
            <person name="Southwick A.M."/>
            <person name="Wu H.C."/>
            <person name="Kim C.J."/>
            <person name="Nguyen M."/>
            <person name="Pham P.K."/>
            <person name="Cheuk R.F."/>
            <person name="Karlin-Newmann G."/>
            <person name="Liu S.X."/>
            <person name="Lam B."/>
            <person name="Sakano H."/>
            <person name="Wu T."/>
            <person name="Yu G."/>
            <person name="Miranda M."/>
            <person name="Quach H.L."/>
            <person name="Tripp M."/>
            <person name="Chang C.H."/>
            <person name="Lee J.M."/>
            <person name="Toriumi M.J."/>
            <person name="Chan M.M."/>
            <person name="Tang C.C."/>
            <person name="Onodera C.S."/>
            <person name="Deng J.M."/>
            <person name="Akiyama K."/>
            <person name="Ansari Y."/>
            <person name="Arakawa T."/>
            <person name="Banh J."/>
            <person name="Banno F."/>
            <person name="Bowser L."/>
            <person name="Brooks S.Y."/>
            <person name="Carninci P."/>
            <person name="Chao Q."/>
            <person name="Choy N."/>
            <person name="Enju A."/>
            <person name="Goldsmith A.D."/>
            <person name="Gurjal M."/>
            <person name="Hansen N.F."/>
            <person name="Hayashizaki Y."/>
            <person name="Johnson-Hopson C."/>
            <person name="Hsuan V.W."/>
            <person name="Iida K."/>
            <person name="Karnes M."/>
            <person name="Khan S."/>
            <person name="Koesema E."/>
            <person name="Ishida J."/>
            <person name="Jiang P.X."/>
            <person name="Jones T."/>
            <person name="Kawai J."/>
            <person name="Kamiya A."/>
            <person name="Meyers C."/>
            <person name="Nakajima M."/>
            <person name="Narusaka M."/>
            <person name="Seki M."/>
            <person name="Sakurai T."/>
            <person name="Satou M."/>
            <person name="Tamse R."/>
            <person name="Vaysberg M."/>
            <person name="Wallender E.K."/>
            <person name="Wong C."/>
            <person name="Yamamura Y."/>
            <person name="Yuan S."/>
            <person name="Shinozaki K."/>
            <person name="Davis R.W."/>
            <person name="Theologis A."/>
            <person name="Ecker J.R."/>
        </authorList>
    </citation>
    <scope>NUCLEOTIDE SEQUENCE [LARGE SCALE MRNA] (ISOFORMS 1 AND 2)</scope>
    <source>
        <strain>cv. Columbia</strain>
    </source>
</reference>
<accession>Q8LPI9</accession>
<accession>Q42528</accession>
<accession>Q8VY51</accession>
<comment type="catalytic activity">
    <reaction>
        <text>N-(5-phospho-beta-D-ribosyl)anthranilate = 1-(2-carboxyphenylamino)-1-deoxy-D-ribulose 5-phosphate</text>
        <dbReference type="Rhea" id="RHEA:21540"/>
        <dbReference type="ChEBI" id="CHEBI:18277"/>
        <dbReference type="ChEBI" id="CHEBI:58613"/>
        <dbReference type="EC" id="5.3.1.24"/>
    </reaction>
</comment>
<comment type="pathway">
    <text>Amino-acid biosynthesis; L-tryptophan biosynthesis; L-tryptophan from chorismate: step 3/5.</text>
</comment>
<comment type="subcellular location">
    <subcellularLocation>
        <location evidence="3">Plastid</location>
        <location evidence="3">Chloroplast</location>
    </subcellularLocation>
</comment>
<comment type="alternative products">
    <event type="alternative splicing"/>
    <isoform>
        <id>Q8LPI9-1</id>
        <name>1</name>
        <sequence type="displayed"/>
    </isoform>
    <isoform>
        <id>Q8LPI9-2</id>
        <name>2</name>
        <sequence type="described" ref="VSP_043745 VSP_043746"/>
    </isoform>
</comment>
<comment type="similarity">
    <text evidence="3">Belongs to the TrpF family.</text>
</comment>
<comment type="sequence caution" evidence="3">
    <conflict type="erroneous gene model prediction">
        <sequence resource="EMBL-CDS" id="AAC49004"/>
    </conflict>
</comment>